<organism>
    <name type="scientific">Klebsiella pneumoniae subsp. pneumoniae (strain ATCC 700721 / MGH 78578)</name>
    <dbReference type="NCBI Taxonomy" id="272620"/>
    <lineage>
        <taxon>Bacteria</taxon>
        <taxon>Pseudomonadati</taxon>
        <taxon>Pseudomonadota</taxon>
        <taxon>Gammaproteobacteria</taxon>
        <taxon>Enterobacterales</taxon>
        <taxon>Enterobacteriaceae</taxon>
        <taxon>Klebsiella/Raoultella group</taxon>
        <taxon>Klebsiella</taxon>
        <taxon>Klebsiella pneumoniae complex</taxon>
    </lineage>
</organism>
<dbReference type="EC" id="3.1.5.1" evidence="1"/>
<dbReference type="EMBL" id="CP000647">
    <property type="protein sequence ID" value="ABR75635.1"/>
    <property type="molecule type" value="Genomic_DNA"/>
</dbReference>
<dbReference type="RefSeq" id="WP_004145871.1">
    <property type="nucleotide sequence ID" value="NC_009648.1"/>
</dbReference>
<dbReference type="SMR" id="A6T4W4"/>
<dbReference type="STRING" id="272620.KPN_00175"/>
<dbReference type="PaxDb" id="272620-KPN_00175"/>
<dbReference type="EnsemblBacteria" id="ABR75635">
    <property type="protein sequence ID" value="ABR75635"/>
    <property type="gene ID" value="KPN_00175"/>
</dbReference>
<dbReference type="KEGG" id="kpn:KPN_00175"/>
<dbReference type="HOGENOM" id="CLU_028163_2_1_6"/>
<dbReference type="Proteomes" id="UP000000265">
    <property type="component" value="Chromosome"/>
</dbReference>
<dbReference type="GO" id="GO:0008832">
    <property type="term" value="F:dGTPase activity"/>
    <property type="evidence" value="ECO:0007669"/>
    <property type="project" value="UniProtKB-UniRule"/>
</dbReference>
<dbReference type="GO" id="GO:0000287">
    <property type="term" value="F:magnesium ion binding"/>
    <property type="evidence" value="ECO:0007669"/>
    <property type="project" value="UniProtKB-UniRule"/>
</dbReference>
<dbReference type="GO" id="GO:0006203">
    <property type="term" value="P:dGTP catabolic process"/>
    <property type="evidence" value="ECO:0007669"/>
    <property type="project" value="InterPro"/>
</dbReference>
<dbReference type="CDD" id="cd00077">
    <property type="entry name" value="HDc"/>
    <property type="match status" value="1"/>
</dbReference>
<dbReference type="FunFam" id="1.10.3210.10:FF:000009">
    <property type="entry name" value="Deoxyguanosinetriphosphate triphosphohydrolase"/>
    <property type="match status" value="1"/>
</dbReference>
<dbReference type="FunFam" id="1.10.3210.10:FF:000010">
    <property type="entry name" value="Deoxyguanosinetriphosphate triphosphohydrolase"/>
    <property type="match status" value="1"/>
</dbReference>
<dbReference type="FunFam" id="1.10.3410.10:FF:000001">
    <property type="entry name" value="Deoxyguanosinetriphosphate triphosphohydrolase"/>
    <property type="match status" value="1"/>
</dbReference>
<dbReference type="Gene3D" id="1.10.3210.10">
    <property type="entry name" value="Hypothetical protein af1432"/>
    <property type="match status" value="2"/>
</dbReference>
<dbReference type="Gene3D" id="1.10.3410.10">
    <property type="entry name" value="putative deoxyguanosinetriphosphate triphosphohydrolase like domain"/>
    <property type="match status" value="1"/>
</dbReference>
<dbReference type="HAMAP" id="MF_00030">
    <property type="entry name" value="dGTPase_type1"/>
    <property type="match status" value="1"/>
</dbReference>
<dbReference type="InterPro" id="IPR023293">
    <property type="entry name" value="dGTP_triP_hydro_central_sf"/>
</dbReference>
<dbReference type="InterPro" id="IPR006261">
    <property type="entry name" value="dGTPase"/>
</dbReference>
<dbReference type="InterPro" id="IPR050135">
    <property type="entry name" value="dGTPase-like"/>
</dbReference>
<dbReference type="InterPro" id="IPR020779">
    <property type="entry name" value="dNTPase_1"/>
</dbReference>
<dbReference type="InterPro" id="IPR003607">
    <property type="entry name" value="HD/PDEase_dom"/>
</dbReference>
<dbReference type="InterPro" id="IPR006674">
    <property type="entry name" value="HD_domain"/>
</dbReference>
<dbReference type="InterPro" id="IPR026875">
    <property type="entry name" value="PHydrolase_assoc_dom"/>
</dbReference>
<dbReference type="NCBIfam" id="TIGR01353">
    <property type="entry name" value="dGTP_triPase"/>
    <property type="match status" value="1"/>
</dbReference>
<dbReference type="NCBIfam" id="NF003429">
    <property type="entry name" value="PRK04926.1"/>
    <property type="match status" value="1"/>
</dbReference>
<dbReference type="PANTHER" id="PTHR11373:SF32">
    <property type="entry name" value="DEOXYGUANOSINETRIPHOSPHATE TRIPHOSPHOHYDROLASE"/>
    <property type="match status" value="1"/>
</dbReference>
<dbReference type="PANTHER" id="PTHR11373">
    <property type="entry name" value="DEOXYNUCLEOSIDE TRIPHOSPHATE TRIPHOSPHOHYDROLASE"/>
    <property type="match status" value="1"/>
</dbReference>
<dbReference type="Pfam" id="PF01966">
    <property type="entry name" value="HD"/>
    <property type="match status" value="1"/>
</dbReference>
<dbReference type="Pfam" id="PF13286">
    <property type="entry name" value="HD_assoc"/>
    <property type="match status" value="1"/>
</dbReference>
<dbReference type="SMART" id="SM00471">
    <property type="entry name" value="HDc"/>
    <property type="match status" value="1"/>
</dbReference>
<dbReference type="SUPFAM" id="SSF109604">
    <property type="entry name" value="HD-domain/PDEase-like"/>
    <property type="match status" value="1"/>
</dbReference>
<dbReference type="PROSITE" id="PS51831">
    <property type="entry name" value="HD"/>
    <property type="match status" value="1"/>
</dbReference>
<protein>
    <recommendedName>
        <fullName evidence="1">Deoxyguanosinetriphosphate triphosphohydrolase</fullName>
        <shortName evidence="1">dGTP triphosphohydrolase</shortName>
        <shortName evidence="1">dGTPase</shortName>
        <ecNumber evidence="1">3.1.5.1</ecNumber>
    </recommendedName>
</protein>
<evidence type="ECO:0000255" key="1">
    <source>
        <dbReference type="HAMAP-Rule" id="MF_00030"/>
    </source>
</evidence>
<evidence type="ECO:0000255" key="2">
    <source>
        <dbReference type="PROSITE-ProRule" id="PRU01175"/>
    </source>
</evidence>
<accession>A6T4W4</accession>
<sequence>MAKIDFRNKINWRRRFRSPPRVETERDILRIFESDRGRIVNSPAIRRLQQKTQVFPLERNAAVRTRLTHSLEVQQVGRYIAKEVLSRLKELRLLEEYGLEELTGPFESVVEMACLMHDIGNPPFGHFGEAAINDWFRQRLAPGDALGQPLTDDRCEVQALRLHDGETSLNALRRKVRQDLCSFEGNAQGIRLVHTLMRMNLTWAQVGCILKYTRPAWWSEETPASHSYLMKKPGYYLAEEEYVARLRKELDLAPYNRFPLTWIMEAADDISYCVADLEDAVEKRIFSAEQLYQHLYDAWGSHEKGSLFSQVVENAWEKSRANYLKQSAEDQFFMYLRVNTLNKLVPYAARRFIDNLPAIFTGDFNHALLEDDSDCSQLLELYKNVAMKQVFSHPDVEQLELQGYRVISGLLDIYQPLLKLSLEDFSELVAQERVRRLPIASRLYQKLSTRHRLAYVEAVNKLARTAPEFALMEYYYRCRLIQDYISGMTDLYAWDEYRRLMAVE</sequence>
<proteinExistence type="inferred from homology"/>
<gene>
    <name evidence="1" type="primary">dgt</name>
    <name type="ordered locus">KPN78578_01740</name>
    <name type="ORF">KPN_00175</name>
</gene>
<comment type="function">
    <text evidence="1">dGTPase preferentially hydrolyzes dGTP over the other canonical NTPs.</text>
</comment>
<comment type="catalytic activity">
    <reaction evidence="1">
        <text>dGTP + H2O = 2'-deoxyguanosine + triphosphate + H(+)</text>
        <dbReference type="Rhea" id="RHEA:15193"/>
        <dbReference type="ChEBI" id="CHEBI:15377"/>
        <dbReference type="ChEBI" id="CHEBI:15378"/>
        <dbReference type="ChEBI" id="CHEBI:17172"/>
        <dbReference type="ChEBI" id="CHEBI:18036"/>
        <dbReference type="ChEBI" id="CHEBI:61429"/>
        <dbReference type="EC" id="3.1.5.1"/>
    </reaction>
</comment>
<comment type="cofactor">
    <cofactor evidence="1">
        <name>Mg(2+)</name>
        <dbReference type="ChEBI" id="CHEBI:18420"/>
    </cofactor>
</comment>
<comment type="subunit">
    <text evidence="1">Homotetramer.</text>
</comment>
<comment type="similarity">
    <text evidence="1">Belongs to the dGTPase family. Type 1 subfamily.</text>
</comment>
<name>DGTP_KLEP7</name>
<reference key="1">
    <citation type="submission" date="2006-09" db="EMBL/GenBank/DDBJ databases">
        <authorList>
            <consortium name="The Klebsiella pneumonia Genome Sequencing Project"/>
            <person name="McClelland M."/>
            <person name="Sanderson E.K."/>
            <person name="Spieth J."/>
            <person name="Clifton W.S."/>
            <person name="Latreille P."/>
            <person name="Sabo A."/>
            <person name="Pepin K."/>
            <person name="Bhonagiri V."/>
            <person name="Porwollik S."/>
            <person name="Ali J."/>
            <person name="Wilson R.K."/>
        </authorList>
    </citation>
    <scope>NUCLEOTIDE SEQUENCE [LARGE SCALE GENOMIC DNA]</scope>
    <source>
        <strain>ATCC 700721 / MGH 78578</strain>
    </source>
</reference>
<feature type="chain" id="PRO_1000006549" description="Deoxyguanosinetriphosphate triphosphohydrolase">
    <location>
        <begin position="1"/>
        <end position="504"/>
    </location>
</feature>
<feature type="domain" description="HD" evidence="2">
    <location>
        <begin position="66"/>
        <end position="273"/>
    </location>
</feature>
<keyword id="KW-0378">Hydrolase</keyword>
<keyword id="KW-0460">Magnesium</keyword>